<accession>A7X3G2</accession>
<sequence length="420" mass="47598">MTNVLIEDLKWRGLIYQQTDEQGIEDLLNKEQVTLYCGADPTADSLHIGHLLPFLTLRRFQEHGHRPIVLIGGGTGMIGDPSGKSEERVLQTEEQVDKNIEGISKQMHNIFEFGTDHGAVLVNNRDWLGQISLISFLRDYGKHVGVNYMLGKDSIQSRLEHGISYTEFTYTILQAIDFGHLNRELNCKIQVGGSDQWGNITSGIELMRRMYGQTDAYGLTIPLVTKSDGKKFGKSESGAVWLDAEKTSPYEFYQFWINQSDEDVIKFLKYFTFLGKEEIDRLEQSKNEAPHLREAQKTLAEEVTKFIHGEDALNDAIRISQALFSGDLKSLSAKELKDGFKDVPQVTLSNDTTNIVEVLIETGISPSKRQAREDVNNGAIYINGERQQDVNYALAPEDKIDGEFTIIRRGKKKYFMVNYQ</sequence>
<proteinExistence type="inferred from homology"/>
<organism>
    <name type="scientific">Staphylococcus aureus (strain Mu3 / ATCC 700698)</name>
    <dbReference type="NCBI Taxonomy" id="418127"/>
    <lineage>
        <taxon>Bacteria</taxon>
        <taxon>Bacillati</taxon>
        <taxon>Bacillota</taxon>
        <taxon>Bacilli</taxon>
        <taxon>Bacillales</taxon>
        <taxon>Staphylococcaceae</taxon>
        <taxon>Staphylococcus</taxon>
    </lineage>
</organism>
<gene>
    <name evidence="1" type="primary">tyrS</name>
    <name type="ordered locus">SAHV_1715</name>
</gene>
<comment type="function">
    <text evidence="1">Catalyzes the attachment of tyrosine to tRNA(Tyr) in a two-step reaction: tyrosine is first activated by ATP to form Tyr-AMP and then transferred to the acceptor end of tRNA(Tyr).</text>
</comment>
<comment type="catalytic activity">
    <reaction evidence="1">
        <text>tRNA(Tyr) + L-tyrosine + ATP = L-tyrosyl-tRNA(Tyr) + AMP + diphosphate + H(+)</text>
        <dbReference type="Rhea" id="RHEA:10220"/>
        <dbReference type="Rhea" id="RHEA-COMP:9706"/>
        <dbReference type="Rhea" id="RHEA-COMP:9707"/>
        <dbReference type="ChEBI" id="CHEBI:15378"/>
        <dbReference type="ChEBI" id="CHEBI:30616"/>
        <dbReference type="ChEBI" id="CHEBI:33019"/>
        <dbReference type="ChEBI" id="CHEBI:58315"/>
        <dbReference type="ChEBI" id="CHEBI:78442"/>
        <dbReference type="ChEBI" id="CHEBI:78536"/>
        <dbReference type="ChEBI" id="CHEBI:456215"/>
        <dbReference type="EC" id="6.1.1.1"/>
    </reaction>
</comment>
<comment type="subunit">
    <text evidence="1">Homodimer.</text>
</comment>
<comment type="subcellular location">
    <subcellularLocation>
        <location evidence="1">Cytoplasm</location>
    </subcellularLocation>
</comment>
<comment type="similarity">
    <text evidence="1">Belongs to the class-I aminoacyl-tRNA synthetase family. TyrS type 1 subfamily.</text>
</comment>
<keyword id="KW-0030">Aminoacyl-tRNA synthetase</keyword>
<keyword id="KW-0067">ATP-binding</keyword>
<keyword id="KW-0963">Cytoplasm</keyword>
<keyword id="KW-0436">Ligase</keyword>
<keyword id="KW-0547">Nucleotide-binding</keyword>
<keyword id="KW-0648">Protein biosynthesis</keyword>
<keyword id="KW-0694">RNA-binding</keyword>
<dbReference type="EC" id="6.1.1.1" evidence="1"/>
<dbReference type="EMBL" id="AP009324">
    <property type="protein sequence ID" value="BAF78598.1"/>
    <property type="molecule type" value="Genomic_DNA"/>
</dbReference>
<dbReference type="RefSeq" id="WP_000186029.1">
    <property type="nucleotide sequence ID" value="NZ_CTYB01000008.1"/>
</dbReference>
<dbReference type="SMR" id="A7X3G2"/>
<dbReference type="KEGG" id="saw:SAHV_1715"/>
<dbReference type="HOGENOM" id="CLU_024003_0_3_9"/>
<dbReference type="GO" id="GO:0005829">
    <property type="term" value="C:cytosol"/>
    <property type="evidence" value="ECO:0007669"/>
    <property type="project" value="TreeGrafter"/>
</dbReference>
<dbReference type="GO" id="GO:0005524">
    <property type="term" value="F:ATP binding"/>
    <property type="evidence" value="ECO:0007669"/>
    <property type="project" value="UniProtKB-UniRule"/>
</dbReference>
<dbReference type="GO" id="GO:0003723">
    <property type="term" value="F:RNA binding"/>
    <property type="evidence" value="ECO:0007669"/>
    <property type="project" value="UniProtKB-KW"/>
</dbReference>
<dbReference type="GO" id="GO:0004831">
    <property type="term" value="F:tyrosine-tRNA ligase activity"/>
    <property type="evidence" value="ECO:0007669"/>
    <property type="project" value="UniProtKB-UniRule"/>
</dbReference>
<dbReference type="GO" id="GO:0006437">
    <property type="term" value="P:tyrosyl-tRNA aminoacylation"/>
    <property type="evidence" value="ECO:0007669"/>
    <property type="project" value="UniProtKB-UniRule"/>
</dbReference>
<dbReference type="CDD" id="cd00165">
    <property type="entry name" value="S4"/>
    <property type="match status" value="1"/>
</dbReference>
<dbReference type="CDD" id="cd00395">
    <property type="entry name" value="Tyr_Trp_RS_core"/>
    <property type="match status" value="1"/>
</dbReference>
<dbReference type="FunFam" id="1.10.240.10:FF:000001">
    <property type="entry name" value="Tyrosine--tRNA ligase"/>
    <property type="match status" value="1"/>
</dbReference>
<dbReference type="FunFam" id="3.10.290.10:FF:000012">
    <property type="entry name" value="Tyrosine--tRNA ligase"/>
    <property type="match status" value="1"/>
</dbReference>
<dbReference type="FunFam" id="3.40.50.620:FF:000008">
    <property type="entry name" value="Tyrosine--tRNA ligase"/>
    <property type="match status" value="1"/>
</dbReference>
<dbReference type="Gene3D" id="3.40.50.620">
    <property type="entry name" value="HUPs"/>
    <property type="match status" value="1"/>
</dbReference>
<dbReference type="Gene3D" id="3.10.290.10">
    <property type="entry name" value="RNA-binding S4 domain"/>
    <property type="match status" value="1"/>
</dbReference>
<dbReference type="Gene3D" id="1.10.240.10">
    <property type="entry name" value="Tyrosyl-Transfer RNA Synthetase"/>
    <property type="match status" value="1"/>
</dbReference>
<dbReference type="HAMAP" id="MF_02006">
    <property type="entry name" value="Tyr_tRNA_synth_type1"/>
    <property type="match status" value="1"/>
</dbReference>
<dbReference type="InterPro" id="IPR001412">
    <property type="entry name" value="aa-tRNA-synth_I_CS"/>
</dbReference>
<dbReference type="InterPro" id="IPR002305">
    <property type="entry name" value="aa-tRNA-synth_Ic"/>
</dbReference>
<dbReference type="InterPro" id="IPR014729">
    <property type="entry name" value="Rossmann-like_a/b/a_fold"/>
</dbReference>
<dbReference type="InterPro" id="IPR002942">
    <property type="entry name" value="S4_RNA-bd"/>
</dbReference>
<dbReference type="InterPro" id="IPR036986">
    <property type="entry name" value="S4_RNA-bd_sf"/>
</dbReference>
<dbReference type="InterPro" id="IPR054608">
    <property type="entry name" value="SYY-like_C"/>
</dbReference>
<dbReference type="InterPro" id="IPR002307">
    <property type="entry name" value="Tyr-tRNA-ligase"/>
</dbReference>
<dbReference type="InterPro" id="IPR024088">
    <property type="entry name" value="Tyr-tRNA-ligase_bac-type"/>
</dbReference>
<dbReference type="InterPro" id="IPR024107">
    <property type="entry name" value="Tyr-tRNA-ligase_bac_1"/>
</dbReference>
<dbReference type="NCBIfam" id="TIGR00234">
    <property type="entry name" value="tyrS"/>
    <property type="match status" value="1"/>
</dbReference>
<dbReference type="PANTHER" id="PTHR11766:SF0">
    <property type="entry name" value="TYROSINE--TRNA LIGASE, MITOCHONDRIAL"/>
    <property type="match status" value="1"/>
</dbReference>
<dbReference type="PANTHER" id="PTHR11766">
    <property type="entry name" value="TYROSYL-TRNA SYNTHETASE"/>
    <property type="match status" value="1"/>
</dbReference>
<dbReference type="Pfam" id="PF22421">
    <property type="entry name" value="SYY_C-terminal"/>
    <property type="match status" value="1"/>
</dbReference>
<dbReference type="Pfam" id="PF00579">
    <property type="entry name" value="tRNA-synt_1b"/>
    <property type="match status" value="1"/>
</dbReference>
<dbReference type="PRINTS" id="PR01040">
    <property type="entry name" value="TRNASYNTHTYR"/>
</dbReference>
<dbReference type="SMART" id="SM00363">
    <property type="entry name" value="S4"/>
    <property type="match status" value="1"/>
</dbReference>
<dbReference type="SUPFAM" id="SSF55174">
    <property type="entry name" value="Alpha-L RNA-binding motif"/>
    <property type="match status" value="1"/>
</dbReference>
<dbReference type="SUPFAM" id="SSF52374">
    <property type="entry name" value="Nucleotidylyl transferase"/>
    <property type="match status" value="1"/>
</dbReference>
<dbReference type="PROSITE" id="PS00178">
    <property type="entry name" value="AA_TRNA_LIGASE_I"/>
    <property type="match status" value="1"/>
</dbReference>
<dbReference type="PROSITE" id="PS50889">
    <property type="entry name" value="S4"/>
    <property type="match status" value="1"/>
</dbReference>
<reference key="1">
    <citation type="journal article" date="2008" name="Antimicrob. Agents Chemother.">
        <title>Mutated response regulator graR is responsible for phenotypic conversion of Staphylococcus aureus from heterogeneous vancomycin-intermediate resistance to vancomycin-intermediate resistance.</title>
        <authorList>
            <person name="Neoh H.-M."/>
            <person name="Cui L."/>
            <person name="Yuzawa H."/>
            <person name="Takeuchi F."/>
            <person name="Matsuo M."/>
            <person name="Hiramatsu K."/>
        </authorList>
    </citation>
    <scope>NUCLEOTIDE SEQUENCE [LARGE SCALE GENOMIC DNA]</scope>
    <source>
        <strain>Mu3 / ATCC 700698</strain>
    </source>
</reference>
<feature type="chain" id="PRO_1000088626" description="Tyrosine--tRNA ligase">
    <location>
        <begin position="1"/>
        <end position="420"/>
    </location>
</feature>
<feature type="domain" description="S4 RNA-binding" evidence="1">
    <location>
        <begin position="353"/>
        <end position="420"/>
    </location>
</feature>
<feature type="short sequence motif" description="'HIGH' region">
    <location>
        <begin position="41"/>
        <end position="50"/>
    </location>
</feature>
<feature type="short sequence motif" description="'KMSKS' region">
    <location>
        <begin position="231"/>
        <end position="235"/>
    </location>
</feature>
<feature type="binding site" evidence="1">
    <location>
        <position position="36"/>
    </location>
    <ligand>
        <name>L-tyrosine</name>
        <dbReference type="ChEBI" id="CHEBI:58315"/>
    </ligand>
</feature>
<feature type="binding site" evidence="1">
    <location>
        <position position="170"/>
    </location>
    <ligand>
        <name>L-tyrosine</name>
        <dbReference type="ChEBI" id="CHEBI:58315"/>
    </ligand>
</feature>
<feature type="binding site" evidence="1">
    <location>
        <position position="174"/>
    </location>
    <ligand>
        <name>L-tyrosine</name>
        <dbReference type="ChEBI" id="CHEBI:58315"/>
    </ligand>
</feature>
<feature type="binding site" evidence="1">
    <location>
        <position position="234"/>
    </location>
    <ligand>
        <name>ATP</name>
        <dbReference type="ChEBI" id="CHEBI:30616"/>
    </ligand>
</feature>
<name>SYY_STAA1</name>
<protein>
    <recommendedName>
        <fullName evidence="1">Tyrosine--tRNA ligase</fullName>
        <ecNumber evidence="1">6.1.1.1</ecNumber>
    </recommendedName>
    <alternativeName>
        <fullName evidence="1">Tyrosyl-tRNA synthetase</fullName>
        <shortName evidence="1">TyrRS</shortName>
    </alternativeName>
</protein>
<evidence type="ECO:0000255" key="1">
    <source>
        <dbReference type="HAMAP-Rule" id="MF_02006"/>
    </source>
</evidence>